<evidence type="ECO:0000255" key="1">
    <source>
        <dbReference type="HAMAP-Rule" id="MF_00091"/>
    </source>
</evidence>
<keyword id="KW-0071">Autoinducer synthesis</keyword>
<keyword id="KW-0408">Iron</keyword>
<keyword id="KW-0456">Lyase</keyword>
<keyword id="KW-0479">Metal-binding</keyword>
<keyword id="KW-0673">Quorum sensing</keyword>
<dbReference type="EC" id="4.4.1.21" evidence="1"/>
<dbReference type="EMBL" id="CP000964">
    <property type="protein sequence ID" value="ACI11857.1"/>
    <property type="molecule type" value="Genomic_DNA"/>
</dbReference>
<dbReference type="SMR" id="B5XVC4"/>
<dbReference type="KEGG" id="kpe:KPK_1109"/>
<dbReference type="HOGENOM" id="CLU_107531_2_0_6"/>
<dbReference type="Proteomes" id="UP000001734">
    <property type="component" value="Chromosome"/>
</dbReference>
<dbReference type="GO" id="GO:0005506">
    <property type="term" value="F:iron ion binding"/>
    <property type="evidence" value="ECO:0007669"/>
    <property type="project" value="InterPro"/>
</dbReference>
<dbReference type="GO" id="GO:0043768">
    <property type="term" value="F:S-ribosylhomocysteine lyase activity"/>
    <property type="evidence" value="ECO:0007669"/>
    <property type="project" value="UniProtKB-UniRule"/>
</dbReference>
<dbReference type="GO" id="GO:0009372">
    <property type="term" value="P:quorum sensing"/>
    <property type="evidence" value="ECO:0007669"/>
    <property type="project" value="UniProtKB-UniRule"/>
</dbReference>
<dbReference type="FunFam" id="3.30.1360.80:FF:000001">
    <property type="entry name" value="S-ribosylhomocysteine lyase"/>
    <property type="match status" value="1"/>
</dbReference>
<dbReference type="Gene3D" id="3.30.1360.80">
    <property type="entry name" value="S-ribosylhomocysteinase (LuxS)"/>
    <property type="match status" value="1"/>
</dbReference>
<dbReference type="HAMAP" id="MF_00091">
    <property type="entry name" value="LuxS"/>
    <property type="match status" value="1"/>
</dbReference>
<dbReference type="InterPro" id="IPR037005">
    <property type="entry name" value="LuxS_sf"/>
</dbReference>
<dbReference type="InterPro" id="IPR011249">
    <property type="entry name" value="Metalloenz_LuxS/M16"/>
</dbReference>
<dbReference type="InterPro" id="IPR003815">
    <property type="entry name" value="S-ribosylhomocysteinase"/>
</dbReference>
<dbReference type="NCBIfam" id="NF002602">
    <property type="entry name" value="PRK02260.1-2"/>
    <property type="match status" value="1"/>
</dbReference>
<dbReference type="PANTHER" id="PTHR35799">
    <property type="entry name" value="S-RIBOSYLHOMOCYSTEINE LYASE"/>
    <property type="match status" value="1"/>
</dbReference>
<dbReference type="PANTHER" id="PTHR35799:SF1">
    <property type="entry name" value="S-RIBOSYLHOMOCYSTEINE LYASE"/>
    <property type="match status" value="1"/>
</dbReference>
<dbReference type="Pfam" id="PF02664">
    <property type="entry name" value="LuxS"/>
    <property type="match status" value="1"/>
</dbReference>
<dbReference type="PIRSF" id="PIRSF006160">
    <property type="entry name" value="AI2"/>
    <property type="match status" value="1"/>
</dbReference>
<dbReference type="PRINTS" id="PR01487">
    <property type="entry name" value="LUXSPROTEIN"/>
</dbReference>
<dbReference type="SUPFAM" id="SSF63411">
    <property type="entry name" value="LuxS/MPP-like metallohydrolase"/>
    <property type="match status" value="1"/>
</dbReference>
<proteinExistence type="inferred from homology"/>
<reference key="1">
    <citation type="journal article" date="2008" name="PLoS Genet.">
        <title>Complete genome sequence of the N2-fixing broad host range endophyte Klebsiella pneumoniae 342 and virulence predictions verified in mice.</title>
        <authorList>
            <person name="Fouts D.E."/>
            <person name="Tyler H.L."/>
            <person name="DeBoy R.T."/>
            <person name="Daugherty S."/>
            <person name="Ren Q."/>
            <person name="Badger J.H."/>
            <person name="Durkin A.S."/>
            <person name="Huot H."/>
            <person name="Shrivastava S."/>
            <person name="Kothari S."/>
            <person name="Dodson R.J."/>
            <person name="Mohamoud Y."/>
            <person name="Khouri H."/>
            <person name="Roesch L.F.W."/>
            <person name="Krogfelt K.A."/>
            <person name="Struve C."/>
            <person name="Triplett E.W."/>
            <person name="Methe B.A."/>
        </authorList>
    </citation>
    <scope>NUCLEOTIDE SEQUENCE [LARGE SCALE GENOMIC DNA]</scope>
    <source>
        <strain>342</strain>
    </source>
</reference>
<comment type="function">
    <text evidence="1">Involved in the synthesis of autoinducer 2 (AI-2) which is secreted by bacteria and is used to communicate both the cell density and the metabolic potential of the environment. The regulation of gene expression in response to changes in cell density is called quorum sensing. Catalyzes the transformation of S-ribosylhomocysteine (RHC) to homocysteine (HC) and 4,5-dihydroxy-2,3-pentadione (DPD).</text>
</comment>
<comment type="catalytic activity">
    <reaction evidence="1">
        <text>S-(5-deoxy-D-ribos-5-yl)-L-homocysteine = (S)-4,5-dihydroxypentane-2,3-dione + L-homocysteine</text>
        <dbReference type="Rhea" id="RHEA:17753"/>
        <dbReference type="ChEBI" id="CHEBI:29484"/>
        <dbReference type="ChEBI" id="CHEBI:58195"/>
        <dbReference type="ChEBI" id="CHEBI:58199"/>
        <dbReference type="EC" id="4.4.1.21"/>
    </reaction>
</comment>
<comment type="cofactor">
    <cofactor evidence="1">
        <name>Fe cation</name>
        <dbReference type="ChEBI" id="CHEBI:24875"/>
    </cofactor>
    <text evidence="1">Binds 1 Fe cation per subunit.</text>
</comment>
<comment type="subunit">
    <text evidence="1">Homodimer.</text>
</comment>
<comment type="similarity">
    <text evidence="1">Belongs to the LuxS family.</text>
</comment>
<feature type="chain" id="PRO_1000093312" description="S-ribosylhomocysteine lyase">
    <location>
        <begin position="1"/>
        <end position="171"/>
    </location>
</feature>
<feature type="binding site" evidence="1">
    <location>
        <position position="54"/>
    </location>
    <ligand>
        <name>Fe cation</name>
        <dbReference type="ChEBI" id="CHEBI:24875"/>
    </ligand>
</feature>
<feature type="binding site" evidence="1">
    <location>
        <position position="58"/>
    </location>
    <ligand>
        <name>Fe cation</name>
        <dbReference type="ChEBI" id="CHEBI:24875"/>
    </ligand>
</feature>
<feature type="binding site" evidence="1">
    <location>
        <position position="128"/>
    </location>
    <ligand>
        <name>Fe cation</name>
        <dbReference type="ChEBI" id="CHEBI:24875"/>
    </ligand>
</feature>
<sequence>MPLLDSFTVDHTRMEAPAVRVAKKMNTPHGDEITVFDLRFCVPNQEVMPERGIHTLEHLFAGFMRDHLNGNGVEIIDISPMGCRTGFYMSLIGTPDEQRVADAWKAAMADVLKVKDQNQIPELNVYQCGTYTMHSLEEAQDIARHIIERDVRINSNDELALPKEKLQELHI</sequence>
<gene>
    <name evidence="1" type="primary">luxS</name>
    <name type="ordered locus">KPK_1109</name>
</gene>
<organism>
    <name type="scientific">Klebsiella pneumoniae (strain 342)</name>
    <dbReference type="NCBI Taxonomy" id="507522"/>
    <lineage>
        <taxon>Bacteria</taxon>
        <taxon>Pseudomonadati</taxon>
        <taxon>Pseudomonadota</taxon>
        <taxon>Gammaproteobacteria</taxon>
        <taxon>Enterobacterales</taxon>
        <taxon>Enterobacteriaceae</taxon>
        <taxon>Klebsiella/Raoultella group</taxon>
        <taxon>Klebsiella</taxon>
        <taxon>Klebsiella pneumoniae complex</taxon>
    </lineage>
</organism>
<name>LUXS_KLEP3</name>
<accession>B5XVC4</accession>
<protein>
    <recommendedName>
        <fullName evidence="1">S-ribosylhomocysteine lyase</fullName>
        <ecNumber evidence="1">4.4.1.21</ecNumber>
    </recommendedName>
    <alternativeName>
        <fullName evidence="1">AI-2 synthesis protein</fullName>
    </alternativeName>
    <alternativeName>
        <fullName evidence="1">Autoinducer-2 production protein LuxS</fullName>
    </alternativeName>
</protein>